<feature type="chain" id="PRO_0000136521" description="Phosphoheptose isomerase">
    <location>
        <begin position="1"/>
        <end position="197"/>
    </location>
</feature>
<feature type="domain" description="SIS">
    <location>
        <begin position="40"/>
        <end position="197"/>
    </location>
</feature>
<feature type="binding site">
    <location>
        <begin position="55"/>
        <end position="57"/>
    </location>
    <ligand>
        <name>substrate</name>
    </ligand>
</feature>
<feature type="binding site" evidence="2">
    <location>
        <position position="64"/>
    </location>
    <ligand>
        <name>Zn(2+)</name>
        <dbReference type="ChEBI" id="CHEBI:29105"/>
    </ligand>
</feature>
<feature type="binding site">
    <location>
        <position position="68"/>
    </location>
    <ligand>
        <name>substrate</name>
    </ligand>
</feature>
<feature type="binding site" evidence="2">
    <location>
        <position position="68"/>
    </location>
    <ligand>
        <name>Zn(2+)</name>
        <dbReference type="ChEBI" id="CHEBI:29105"/>
    </ligand>
</feature>
<feature type="binding site">
    <location>
        <begin position="97"/>
        <end position="98"/>
    </location>
    <ligand>
        <name>substrate</name>
    </ligand>
</feature>
<feature type="binding site">
    <location>
        <begin position="123"/>
        <end position="125"/>
    </location>
    <ligand>
        <name>substrate</name>
    </ligand>
</feature>
<feature type="binding site">
    <location>
        <position position="128"/>
    </location>
    <ligand>
        <name>substrate</name>
    </ligand>
</feature>
<feature type="binding site">
    <location>
        <position position="175"/>
    </location>
    <ligand>
        <name>substrate</name>
    </ligand>
</feature>
<feature type="binding site" evidence="2">
    <location>
        <position position="175"/>
    </location>
    <ligand>
        <name>Zn(2+)</name>
        <dbReference type="ChEBI" id="CHEBI:29105"/>
    </ligand>
</feature>
<feature type="binding site" evidence="2">
    <location>
        <position position="183"/>
    </location>
    <ligand>
        <name>Zn(2+)</name>
        <dbReference type="ChEBI" id="CHEBI:29105"/>
    </ligand>
</feature>
<feature type="mutagenesis site" description="Less than 6% of wild-type activity." evidence="2">
    <original>D</original>
    <variation>A</variation>
    <location>
        <position position="61"/>
    </location>
</feature>
<feature type="mutagenesis site" description="Less than 10% of wild-type activity." evidence="2">
    <original>H</original>
    <variation>Q</variation>
    <location>
        <position position="64"/>
    </location>
</feature>
<feature type="mutagenesis site" description="No activity." evidence="2">
    <original>E</original>
    <variation>Q</variation>
    <location>
        <position position="68"/>
    </location>
</feature>
<feature type="mutagenesis site" description="No activity." evidence="2">
    <original>D</original>
    <variation>N</variation>
    <location>
        <position position="98"/>
    </location>
</feature>
<feature type="mutagenesis site" description="No activity." evidence="2">
    <original>T</original>
    <variation>A</variation>
    <location>
        <position position="124"/>
    </location>
</feature>
<feature type="mutagenesis site" description="No activity." evidence="2">
    <original>Q</original>
    <variation>E</variation>
    <location>
        <position position="175"/>
    </location>
</feature>
<feature type="sequence conflict" description="In Ref. 1; AAK49808." evidence="3" ref="1">
    <original>R</original>
    <variation>Q</variation>
    <location>
        <position position="34"/>
    </location>
</feature>
<feature type="sequence conflict" description="In Ref. 1; AAK49808." evidence="3" ref="1">
    <original>E</original>
    <variation>K</variation>
    <location>
        <position position="115"/>
    </location>
</feature>
<feature type="helix" evidence="4">
    <location>
        <begin position="7"/>
        <end position="24"/>
    </location>
</feature>
<feature type="helix" evidence="4">
    <location>
        <begin position="27"/>
        <end position="45"/>
    </location>
</feature>
<feature type="strand" evidence="4">
    <location>
        <begin position="50"/>
        <end position="53"/>
    </location>
</feature>
<feature type="helix" evidence="4">
    <location>
        <begin position="57"/>
        <end position="70"/>
    </location>
</feature>
<feature type="strand" evidence="4">
    <location>
        <begin position="73"/>
        <end position="75"/>
    </location>
</feature>
<feature type="strand" evidence="4">
    <location>
        <begin position="82"/>
        <end position="84"/>
    </location>
</feature>
<feature type="helix" evidence="4">
    <location>
        <begin position="89"/>
        <end position="98"/>
    </location>
</feature>
<feature type="helix" evidence="4">
    <location>
        <begin position="101"/>
        <end position="103"/>
    </location>
</feature>
<feature type="helix" evidence="4">
    <location>
        <begin position="106"/>
        <end position="112"/>
    </location>
</feature>
<feature type="strand" evidence="4">
    <location>
        <begin position="118"/>
        <end position="122"/>
    </location>
</feature>
<feature type="strand" evidence="4">
    <location>
        <begin position="124"/>
        <end position="126"/>
    </location>
</feature>
<feature type="helix" evidence="4">
    <location>
        <begin position="129"/>
        <end position="140"/>
    </location>
</feature>
<feature type="strand" evidence="4">
    <location>
        <begin position="144"/>
        <end position="149"/>
    </location>
</feature>
<feature type="helix" evidence="4">
    <location>
        <begin position="156"/>
        <end position="159"/>
    </location>
</feature>
<feature type="strand" evidence="4">
    <location>
        <begin position="161"/>
        <end position="165"/>
    </location>
</feature>
<feature type="helix" evidence="4">
    <location>
        <begin position="171"/>
        <end position="194"/>
    </location>
</feature>
<sequence length="197" mass="20813">MENRELTYITNSIAEAQRVMAAMLADERLLATVRKVADACIASIAQGGKVLLAGNGGSAADAQHIAGEFVSRFAFDRPGLPAVALTTDTSILTAIGNDYGYEKLFSRQVQALGNEGDVLIGYSTSGKSPNILAAFREAKAKGMTCVGFTGNRGGEMRELCDLLLEVPSADTPKIQEGHLVLGHIVCGLVEHSIFGKQ</sequence>
<name>GMHA_BURPS</name>
<organism>
    <name type="scientific">Burkholderia pseudomallei (strain K96243)</name>
    <dbReference type="NCBI Taxonomy" id="272560"/>
    <lineage>
        <taxon>Bacteria</taxon>
        <taxon>Pseudomonadati</taxon>
        <taxon>Pseudomonadota</taxon>
        <taxon>Betaproteobacteria</taxon>
        <taxon>Burkholderiales</taxon>
        <taxon>Burkholderiaceae</taxon>
        <taxon>Burkholderia</taxon>
        <taxon>pseudomallei group</taxon>
    </lineage>
</organism>
<gene>
    <name type="primary">gmhA</name>
    <name type="ordered locus">BPSL2795</name>
</gene>
<dbReference type="EC" id="5.3.1.28"/>
<dbReference type="EMBL" id="AF228583">
    <property type="protein sequence ID" value="AAK49808.1"/>
    <property type="molecule type" value="Genomic_DNA"/>
</dbReference>
<dbReference type="EMBL" id="BX571965">
    <property type="protein sequence ID" value="CAH36804.1"/>
    <property type="molecule type" value="Genomic_DNA"/>
</dbReference>
<dbReference type="RefSeq" id="WP_011205222.1">
    <property type="nucleotide sequence ID" value="NC_006350.1"/>
</dbReference>
<dbReference type="RefSeq" id="YP_109390.1">
    <property type="nucleotide sequence ID" value="NC_006350.1"/>
</dbReference>
<dbReference type="PDB" id="2X3Y">
    <property type="method" value="X-ray"/>
    <property type="resolution" value="2.40 A"/>
    <property type="chains" value="A/B/C/D/E/F/G/H=1-197"/>
</dbReference>
<dbReference type="PDB" id="2XBL">
    <property type="method" value="X-ray"/>
    <property type="resolution" value="1.62 A"/>
    <property type="chains" value="A/B/C/D=1-197"/>
</dbReference>
<dbReference type="PDB" id="5LTZ">
    <property type="method" value="X-ray"/>
    <property type="resolution" value="1.67 A"/>
    <property type="chains" value="A/B/C/D=1-197"/>
</dbReference>
<dbReference type="PDB" id="5LU5">
    <property type="method" value="X-ray"/>
    <property type="resolution" value="1.55 A"/>
    <property type="chains" value="A/B/C/D=1-197"/>
</dbReference>
<dbReference type="PDB" id="5LU6">
    <property type="method" value="X-ray"/>
    <property type="resolution" value="1.67 A"/>
    <property type="chains" value="A/B/C/D=1-196"/>
</dbReference>
<dbReference type="PDB" id="5LU7">
    <property type="method" value="X-ray"/>
    <property type="resolution" value="1.92 A"/>
    <property type="chains" value="A/B/C/D=1-197"/>
</dbReference>
<dbReference type="PDB" id="8V2T">
    <property type="method" value="X-ray"/>
    <property type="resolution" value="1.40 A"/>
    <property type="chains" value="A=1-197"/>
</dbReference>
<dbReference type="PDB" id="8V4J">
    <property type="method" value="X-ray"/>
    <property type="resolution" value="1.31 A"/>
    <property type="chains" value="A=1-197"/>
</dbReference>
<dbReference type="PDBsum" id="2X3Y"/>
<dbReference type="PDBsum" id="2XBL"/>
<dbReference type="PDBsum" id="5LTZ"/>
<dbReference type="PDBsum" id="5LU5"/>
<dbReference type="PDBsum" id="5LU6"/>
<dbReference type="PDBsum" id="5LU7"/>
<dbReference type="PDBsum" id="8V2T"/>
<dbReference type="PDBsum" id="8V4J"/>
<dbReference type="SMR" id="Q93UJ2"/>
<dbReference type="STRING" id="272560.BPSL2795"/>
<dbReference type="KEGG" id="bps:BPSL2795"/>
<dbReference type="PATRIC" id="fig|272560.51.peg.2513"/>
<dbReference type="eggNOG" id="COG0279">
    <property type="taxonomic scope" value="Bacteria"/>
</dbReference>
<dbReference type="BRENDA" id="5.3.1.28">
    <property type="organism ID" value="1031"/>
</dbReference>
<dbReference type="SABIO-RK" id="Q93UJ2"/>
<dbReference type="UniPathway" id="UPA00041">
    <property type="reaction ID" value="UER00436"/>
</dbReference>
<dbReference type="UniPathway" id="UPA00934"/>
<dbReference type="EvolutionaryTrace" id="Q93UJ2"/>
<dbReference type="Proteomes" id="UP000000605">
    <property type="component" value="Chromosome 1"/>
</dbReference>
<dbReference type="GO" id="GO:0005737">
    <property type="term" value="C:cytoplasm"/>
    <property type="evidence" value="ECO:0007669"/>
    <property type="project" value="UniProtKB-SubCell"/>
</dbReference>
<dbReference type="GO" id="GO:0097367">
    <property type="term" value="F:carbohydrate derivative binding"/>
    <property type="evidence" value="ECO:0007669"/>
    <property type="project" value="InterPro"/>
</dbReference>
<dbReference type="GO" id="GO:0008968">
    <property type="term" value="F:D-sedoheptulose 7-phosphate isomerase activity"/>
    <property type="evidence" value="ECO:0007669"/>
    <property type="project" value="UniProtKB-UniRule"/>
</dbReference>
<dbReference type="GO" id="GO:0008270">
    <property type="term" value="F:zinc ion binding"/>
    <property type="evidence" value="ECO:0007669"/>
    <property type="project" value="UniProtKB-UniRule"/>
</dbReference>
<dbReference type="GO" id="GO:0045227">
    <property type="term" value="P:capsule polysaccharide biosynthetic process"/>
    <property type="evidence" value="ECO:0007669"/>
    <property type="project" value="UniProtKB-UniPathway"/>
</dbReference>
<dbReference type="GO" id="GO:2001061">
    <property type="term" value="P:D-glycero-D-manno-heptose 7-phosphate biosynthetic process"/>
    <property type="evidence" value="ECO:0007669"/>
    <property type="project" value="UniProtKB-UniPathway"/>
</dbReference>
<dbReference type="CDD" id="cd05006">
    <property type="entry name" value="SIS_GmhA"/>
    <property type="match status" value="1"/>
</dbReference>
<dbReference type="Gene3D" id="3.40.50.10490">
    <property type="entry name" value="Glucose-6-phosphate isomerase like protein, domain 1"/>
    <property type="match status" value="1"/>
</dbReference>
<dbReference type="HAMAP" id="MF_00067">
    <property type="entry name" value="GmhA"/>
    <property type="match status" value="1"/>
</dbReference>
<dbReference type="InterPro" id="IPR035461">
    <property type="entry name" value="GmhA/DiaA"/>
</dbReference>
<dbReference type="InterPro" id="IPR004515">
    <property type="entry name" value="Phosphoheptose_Isoase"/>
</dbReference>
<dbReference type="InterPro" id="IPR001347">
    <property type="entry name" value="SIS_dom"/>
</dbReference>
<dbReference type="InterPro" id="IPR046348">
    <property type="entry name" value="SIS_dom_sf"/>
</dbReference>
<dbReference type="InterPro" id="IPR050099">
    <property type="entry name" value="SIS_GmhA/DiaA_subfam"/>
</dbReference>
<dbReference type="PANTHER" id="PTHR30390:SF6">
    <property type="entry name" value="DNAA INITIATOR-ASSOCIATING PROTEIN DIAA"/>
    <property type="match status" value="1"/>
</dbReference>
<dbReference type="PANTHER" id="PTHR30390">
    <property type="entry name" value="SEDOHEPTULOSE 7-PHOSPHATE ISOMERASE / DNAA INITIATOR-ASSOCIATING FACTOR FOR REPLICATION INITIATION"/>
    <property type="match status" value="1"/>
</dbReference>
<dbReference type="Pfam" id="PF13580">
    <property type="entry name" value="SIS_2"/>
    <property type="match status" value="1"/>
</dbReference>
<dbReference type="SUPFAM" id="SSF53697">
    <property type="entry name" value="SIS domain"/>
    <property type="match status" value="1"/>
</dbReference>
<dbReference type="PROSITE" id="PS51464">
    <property type="entry name" value="SIS"/>
    <property type="match status" value="1"/>
</dbReference>
<comment type="function">
    <text evidence="2">Catalyzes the isomerization of sedoheptulose 7-phosphate in D-glycero-D-manno-heptose 7-phosphate.</text>
</comment>
<comment type="catalytic activity">
    <reaction evidence="2">
        <text>2 D-sedoheptulose 7-phosphate = D-glycero-alpha-D-manno-heptose 7-phosphate + D-glycero-beta-D-manno-heptose 7-phosphate</text>
        <dbReference type="Rhea" id="RHEA:27489"/>
        <dbReference type="ChEBI" id="CHEBI:57483"/>
        <dbReference type="ChEBI" id="CHEBI:60203"/>
        <dbReference type="ChEBI" id="CHEBI:60204"/>
        <dbReference type="EC" id="5.3.1.28"/>
    </reaction>
</comment>
<comment type="cofactor">
    <cofactor evidence="2">
        <name>Zn(2+)</name>
        <dbReference type="ChEBI" id="CHEBI:29105"/>
    </cofactor>
    <text evidence="2">Binds 1 zinc ion per subunit.</text>
</comment>
<comment type="pathway">
    <text>Carbohydrate biosynthesis; D-glycero-D-manno-heptose 7-phosphate biosynthesis; D-glycero-alpha-D-manno-heptose 7-phosphate and D-glycero-beta-D-manno-heptose 7-phosphate from sedoheptulose 7-phosphate: step 1/1.</text>
</comment>
<comment type="pathway">
    <text>Capsule biogenesis; capsule polysaccharide biosynthesis.</text>
</comment>
<comment type="subunit">
    <text evidence="2">Homotetramer.</text>
</comment>
<comment type="subcellular location">
    <subcellularLocation>
        <location evidence="1">Cytoplasm</location>
    </subcellularLocation>
</comment>
<comment type="miscellaneous">
    <text>The reaction produces a racemic mixture of D-glycero-alpha-D-manno-heptose 7-phosphate and D-glycero-beta-D-manno-heptose 7-phosphate.</text>
</comment>
<comment type="similarity">
    <text evidence="3">Belongs to the SIS family. GmhA subfamily.</text>
</comment>
<evidence type="ECO:0000250" key="1"/>
<evidence type="ECO:0000269" key="2">
    <source>
    </source>
</evidence>
<evidence type="ECO:0000305" key="3"/>
<evidence type="ECO:0007829" key="4">
    <source>
        <dbReference type="PDB" id="8V4J"/>
    </source>
</evidence>
<accession>Q93UJ2</accession>
<accession>Q63R78</accession>
<protein>
    <recommendedName>
        <fullName>Phosphoheptose isomerase</fullName>
        <ecNumber>5.3.1.28</ecNumber>
    </recommendedName>
    <alternativeName>
        <fullName>Sedoheptulose 7-phosphate isomerase</fullName>
    </alternativeName>
</protein>
<proteinExistence type="evidence at protein level"/>
<reference key="1">
    <citation type="journal article" date="2001" name="Infect. Immun.">
        <title>Detection of bacterial virulence genes by subtractive hybridization: identification of capsular polysaccharide of Burkholderia pseudomallei as a major virulence determinant.</title>
        <authorList>
            <person name="Reckseidler S.L."/>
            <person name="DeShazer D."/>
            <person name="Sokol P.A."/>
            <person name="Woods D.E."/>
        </authorList>
    </citation>
    <scope>NUCLEOTIDE SEQUENCE [GENOMIC DNA]</scope>
</reference>
<reference key="2">
    <citation type="journal article" date="2004" name="Proc. Natl. Acad. Sci. U.S.A.">
        <title>Genomic plasticity of the causative agent of melioidosis, Burkholderia pseudomallei.</title>
        <authorList>
            <person name="Holden M.T.G."/>
            <person name="Titball R.W."/>
            <person name="Peacock S.J."/>
            <person name="Cerdeno-Tarraga A.-M."/>
            <person name="Atkins T."/>
            <person name="Crossman L.C."/>
            <person name="Pitt T."/>
            <person name="Churcher C."/>
            <person name="Mungall K.L."/>
            <person name="Bentley S.D."/>
            <person name="Sebaihia M."/>
            <person name="Thomson N.R."/>
            <person name="Bason N."/>
            <person name="Beacham I.R."/>
            <person name="Brooks K."/>
            <person name="Brown K.A."/>
            <person name="Brown N.F."/>
            <person name="Challis G.L."/>
            <person name="Cherevach I."/>
            <person name="Chillingworth T."/>
            <person name="Cronin A."/>
            <person name="Crossett B."/>
            <person name="Davis P."/>
            <person name="DeShazer D."/>
            <person name="Feltwell T."/>
            <person name="Fraser A."/>
            <person name="Hance Z."/>
            <person name="Hauser H."/>
            <person name="Holroyd S."/>
            <person name="Jagels K."/>
            <person name="Keith K.E."/>
            <person name="Maddison M."/>
            <person name="Moule S."/>
            <person name="Price C."/>
            <person name="Quail M.A."/>
            <person name="Rabbinowitsch E."/>
            <person name="Rutherford K."/>
            <person name="Sanders M."/>
            <person name="Simmonds M."/>
            <person name="Songsivilai S."/>
            <person name="Stevens K."/>
            <person name="Tumapa S."/>
            <person name="Vesaratchavest M."/>
            <person name="Whitehead S."/>
            <person name="Yeats C."/>
            <person name="Barrell B.G."/>
            <person name="Oyston P.C.F."/>
            <person name="Parkhill J."/>
        </authorList>
    </citation>
    <scope>NUCLEOTIDE SEQUENCE [LARGE SCALE GENOMIC DNA]</scope>
    <source>
        <strain>K96243</strain>
    </source>
</reference>
<reference key="3">
    <citation type="journal article" date="2002" name="Microbiology">
        <title>Novel pathways for biosynthesis of nucleotide-activated glycero-manno-heptose precursors of bacterial glycoproteins and cell surface polysaccharides.</title>
        <authorList>
            <person name="Valvano M.A."/>
            <person name="Messner P."/>
            <person name="Kosma P."/>
        </authorList>
    </citation>
    <scope>BIOSYNTHESIS OF NUCLEOTIDE-ACTIVATED GLYCERO-MANNO-HEPTOSE</scope>
</reference>
<reference key="4">
    <citation type="journal article" date="2010" name="J. Mol. Biol.">
        <title>The structure of sedoheptulose-7-phosphate isomerase from Burkholderia pseudomallei reveals a zinc binding site at the heart of the active site.</title>
        <authorList>
            <person name="Harmer N.J."/>
        </authorList>
    </citation>
    <scope>X-RAY CRYSTALLOGRAPHY (2.4 ANGSTROMS) IN COMPLEX WITH ZINC AND D-GLYCERO-ALPHA-D-MANNO-HEPTOSE 7-PHOSPHATE</scope>
    <scope>FUNCTION</scope>
    <scope>CATALYTIC ACTIVITY</scope>
    <scope>COFACTOR</scope>
    <scope>SUBUNIT</scope>
    <scope>REACTION MECHANISM</scope>
    <scope>MUTAGENESIS OF ASP-61; HIS-64; GLU-68; ASP-98; THR-124 AND GLN-175</scope>
</reference>
<keyword id="KW-0002">3D-structure</keyword>
<keyword id="KW-0972">Capsule biogenesis/degradation</keyword>
<keyword id="KW-0119">Carbohydrate metabolism</keyword>
<keyword id="KW-0963">Cytoplasm</keyword>
<keyword id="KW-0413">Isomerase</keyword>
<keyword id="KW-0479">Metal-binding</keyword>
<keyword id="KW-1185">Reference proteome</keyword>
<keyword id="KW-0862">Zinc</keyword>